<keyword id="KW-0028">Amino-acid biosynthesis</keyword>
<keyword id="KW-0100">Branched-chain amino acid biosynthesis</keyword>
<keyword id="KW-0963">Cytoplasm</keyword>
<keyword id="KW-0432">Leucine biosynthesis</keyword>
<keyword id="KW-0464">Manganese</keyword>
<keyword id="KW-0479">Metal-binding</keyword>
<keyword id="KW-0808">Transferase</keyword>
<evidence type="ECO:0000255" key="1">
    <source>
        <dbReference type="HAMAP-Rule" id="MF_01025"/>
    </source>
</evidence>
<proteinExistence type="inferred from homology"/>
<reference key="1">
    <citation type="journal article" date="2006" name="J. Bacteriol.">
        <title>Pathogenomic sequence analysis of Bacillus cereus and Bacillus thuringiensis isolates closely related to Bacillus anthracis.</title>
        <authorList>
            <person name="Han C.S."/>
            <person name="Xie G."/>
            <person name="Challacombe J.F."/>
            <person name="Altherr M.R."/>
            <person name="Bhotika S.S."/>
            <person name="Bruce D."/>
            <person name="Campbell C.S."/>
            <person name="Campbell M.L."/>
            <person name="Chen J."/>
            <person name="Chertkov O."/>
            <person name="Cleland C."/>
            <person name="Dimitrijevic M."/>
            <person name="Doggett N.A."/>
            <person name="Fawcett J.J."/>
            <person name="Glavina T."/>
            <person name="Goodwin L.A."/>
            <person name="Hill K.K."/>
            <person name="Hitchcock P."/>
            <person name="Jackson P.J."/>
            <person name="Keim P."/>
            <person name="Kewalramani A.R."/>
            <person name="Longmire J."/>
            <person name="Lucas S."/>
            <person name="Malfatti S."/>
            <person name="McMurry K."/>
            <person name="Meincke L.J."/>
            <person name="Misra M."/>
            <person name="Moseman B.L."/>
            <person name="Mundt M."/>
            <person name="Munk A.C."/>
            <person name="Okinaka R.T."/>
            <person name="Parson-Quintana B."/>
            <person name="Reilly L.P."/>
            <person name="Richardson P."/>
            <person name="Robinson D.L."/>
            <person name="Rubin E."/>
            <person name="Saunders E."/>
            <person name="Tapia R."/>
            <person name="Tesmer J.G."/>
            <person name="Thayer N."/>
            <person name="Thompson L.S."/>
            <person name="Tice H."/>
            <person name="Ticknor L.O."/>
            <person name="Wills P.L."/>
            <person name="Brettin T.S."/>
            <person name="Gilna P."/>
        </authorList>
    </citation>
    <scope>NUCLEOTIDE SEQUENCE [LARGE SCALE GENOMIC DNA]</scope>
    <source>
        <strain>97-27</strain>
    </source>
</reference>
<accession>Q6HLF3</accession>
<sequence length="506" mass="55371">MKQILFMDTTLRDGEQSPGVNLNEQEKLQIARQLERLGIHVMEAGFAAASEGDFQSVKRIANTIQNATVMSLARAKESDIRRAYEAVKGAVSPRLHVFLATSDIHMKYKLCMSKEDVLDSIHRSVTLGKSLFPTVQFSAEDATRTARDFLAEAIEVAIRAGANVINIPDTVGYTNPEEYYSLFKYLQESVPSYEKAIFSCHCHDDLGMAVANSLAAVEGGALQVEGTINGIGERAGNAALEEVAVALHIRKDFYKAEPSITLKEIKATSTLVSRLTGMVVPKNKAIVGANAFAHESGIHQDGVLKEVTTYEIIEPALVGESQNLFVLGKHSGRHAFTEKMKELGYEFTNDERDAVFEAFKKLADRKKEITEEDLRALMLGEAAFAAQQYNITQLQVHFVSNSTQCATVVLKDEEGNVFEDAATGSGSIEAIYNAIQRILGLECELADYRIQSITQGQDALAHVHVELKEGAHQVSGFGVAQDVLEASARAYVHAAGKLKSFIQLVK</sequence>
<feature type="chain" id="PRO_1000149135" description="2-isopropylmalate synthase">
    <location>
        <begin position="1"/>
        <end position="506"/>
    </location>
</feature>
<feature type="domain" description="Pyruvate carboxyltransferase" evidence="1">
    <location>
        <begin position="4"/>
        <end position="266"/>
    </location>
</feature>
<feature type="region of interest" description="Regulatory domain" evidence="1">
    <location>
        <begin position="390"/>
        <end position="506"/>
    </location>
</feature>
<feature type="binding site" evidence="1">
    <location>
        <position position="13"/>
    </location>
    <ligand>
        <name>Mn(2+)</name>
        <dbReference type="ChEBI" id="CHEBI:29035"/>
    </ligand>
</feature>
<feature type="binding site" evidence="1">
    <location>
        <position position="201"/>
    </location>
    <ligand>
        <name>Mn(2+)</name>
        <dbReference type="ChEBI" id="CHEBI:29035"/>
    </ligand>
</feature>
<feature type="binding site" evidence="1">
    <location>
        <position position="203"/>
    </location>
    <ligand>
        <name>Mn(2+)</name>
        <dbReference type="ChEBI" id="CHEBI:29035"/>
    </ligand>
</feature>
<feature type="binding site" evidence="1">
    <location>
        <position position="237"/>
    </location>
    <ligand>
        <name>Mn(2+)</name>
        <dbReference type="ChEBI" id="CHEBI:29035"/>
    </ligand>
</feature>
<name>LEU1_BACHK</name>
<comment type="function">
    <text evidence="1">Catalyzes the condensation of the acetyl group of acetyl-CoA with 3-methyl-2-oxobutanoate (2-ketoisovalerate) to form 3-carboxy-3-hydroxy-4-methylpentanoate (2-isopropylmalate).</text>
</comment>
<comment type="catalytic activity">
    <reaction evidence="1">
        <text>3-methyl-2-oxobutanoate + acetyl-CoA + H2O = (2S)-2-isopropylmalate + CoA + H(+)</text>
        <dbReference type="Rhea" id="RHEA:21524"/>
        <dbReference type="ChEBI" id="CHEBI:1178"/>
        <dbReference type="ChEBI" id="CHEBI:11851"/>
        <dbReference type="ChEBI" id="CHEBI:15377"/>
        <dbReference type="ChEBI" id="CHEBI:15378"/>
        <dbReference type="ChEBI" id="CHEBI:57287"/>
        <dbReference type="ChEBI" id="CHEBI:57288"/>
        <dbReference type="EC" id="2.3.3.13"/>
    </reaction>
</comment>
<comment type="cofactor">
    <cofactor evidence="1">
        <name>Mn(2+)</name>
        <dbReference type="ChEBI" id="CHEBI:29035"/>
    </cofactor>
</comment>
<comment type="pathway">
    <text evidence="1">Amino-acid biosynthesis; L-leucine biosynthesis; L-leucine from 3-methyl-2-oxobutanoate: step 1/4.</text>
</comment>
<comment type="subunit">
    <text evidence="1">Homodimer.</text>
</comment>
<comment type="subcellular location">
    <subcellularLocation>
        <location evidence="1">Cytoplasm</location>
    </subcellularLocation>
</comment>
<comment type="similarity">
    <text evidence="1">Belongs to the alpha-IPM synthase/homocitrate synthase family. LeuA type 1 subfamily.</text>
</comment>
<dbReference type="EC" id="2.3.3.13" evidence="1"/>
<dbReference type="EMBL" id="AE017355">
    <property type="protein sequence ID" value="AAT59414.1"/>
    <property type="molecule type" value="Genomic_DNA"/>
</dbReference>
<dbReference type="RefSeq" id="WP_000809574.1">
    <property type="nucleotide sequence ID" value="NC_005957.1"/>
</dbReference>
<dbReference type="RefSeq" id="YP_035618.1">
    <property type="nucleotide sequence ID" value="NC_005957.1"/>
</dbReference>
<dbReference type="SMR" id="Q6HLF3"/>
<dbReference type="KEGG" id="btk:BT9727_1284"/>
<dbReference type="PATRIC" id="fig|281309.8.peg.1353"/>
<dbReference type="HOGENOM" id="CLU_022158_0_1_9"/>
<dbReference type="UniPathway" id="UPA00048">
    <property type="reaction ID" value="UER00070"/>
</dbReference>
<dbReference type="Proteomes" id="UP000001301">
    <property type="component" value="Chromosome"/>
</dbReference>
<dbReference type="GO" id="GO:0005737">
    <property type="term" value="C:cytoplasm"/>
    <property type="evidence" value="ECO:0007669"/>
    <property type="project" value="UniProtKB-SubCell"/>
</dbReference>
<dbReference type="GO" id="GO:0003852">
    <property type="term" value="F:2-isopropylmalate synthase activity"/>
    <property type="evidence" value="ECO:0007669"/>
    <property type="project" value="UniProtKB-UniRule"/>
</dbReference>
<dbReference type="GO" id="GO:0003985">
    <property type="term" value="F:acetyl-CoA C-acetyltransferase activity"/>
    <property type="evidence" value="ECO:0007669"/>
    <property type="project" value="UniProtKB-UniRule"/>
</dbReference>
<dbReference type="GO" id="GO:0030145">
    <property type="term" value="F:manganese ion binding"/>
    <property type="evidence" value="ECO:0007669"/>
    <property type="project" value="UniProtKB-UniRule"/>
</dbReference>
<dbReference type="GO" id="GO:0009098">
    <property type="term" value="P:L-leucine biosynthetic process"/>
    <property type="evidence" value="ECO:0007669"/>
    <property type="project" value="UniProtKB-UniRule"/>
</dbReference>
<dbReference type="CDD" id="cd07940">
    <property type="entry name" value="DRE_TIM_IPMS"/>
    <property type="match status" value="1"/>
</dbReference>
<dbReference type="FunFam" id="1.10.238.260:FF:000001">
    <property type="entry name" value="2-isopropylmalate synthase"/>
    <property type="match status" value="1"/>
</dbReference>
<dbReference type="FunFam" id="3.20.20.70:FF:000287">
    <property type="entry name" value="2-isopropylmalate synthase"/>
    <property type="match status" value="1"/>
</dbReference>
<dbReference type="FunFam" id="3.30.160.270:FF:000003">
    <property type="entry name" value="2-isopropylmalate synthase"/>
    <property type="match status" value="1"/>
</dbReference>
<dbReference type="Gene3D" id="1.10.238.260">
    <property type="match status" value="1"/>
</dbReference>
<dbReference type="Gene3D" id="3.30.160.270">
    <property type="match status" value="1"/>
</dbReference>
<dbReference type="Gene3D" id="3.20.20.70">
    <property type="entry name" value="Aldolase class I"/>
    <property type="match status" value="1"/>
</dbReference>
<dbReference type="HAMAP" id="MF_01025">
    <property type="entry name" value="LeuA_type1"/>
    <property type="match status" value="1"/>
</dbReference>
<dbReference type="InterPro" id="IPR050073">
    <property type="entry name" value="2-IPM_HCS-like"/>
</dbReference>
<dbReference type="InterPro" id="IPR013709">
    <property type="entry name" value="2-isopropylmalate_synth_dimer"/>
</dbReference>
<dbReference type="InterPro" id="IPR002034">
    <property type="entry name" value="AIPM/Hcit_synth_CS"/>
</dbReference>
<dbReference type="InterPro" id="IPR013785">
    <property type="entry name" value="Aldolase_TIM"/>
</dbReference>
<dbReference type="InterPro" id="IPR054691">
    <property type="entry name" value="LeuA/HCS_post-cat"/>
</dbReference>
<dbReference type="InterPro" id="IPR036230">
    <property type="entry name" value="LeuA_allosteric_dom_sf"/>
</dbReference>
<dbReference type="InterPro" id="IPR005671">
    <property type="entry name" value="LeuA_bact_synth"/>
</dbReference>
<dbReference type="InterPro" id="IPR000891">
    <property type="entry name" value="PYR_CT"/>
</dbReference>
<dbReference type="NCBIfam" id="TIGR00973">
    <property type="entry name" value="leuA_bact"/>
    <property type="match status" value="1"/>
</dbReference>
<dbReference type="NCBIfam" id="NF002086">
    <property type="entry name" value="PRK00915.1-3"/>
    <property type="match status" value="1"/>
</dbReference>
<dbReference type="NCBIfam" id="NF002088">
    <property type="entry name" value="PRK00915.1-5"/>
    <property type="match status" value="1"/>
</dbReference>
<dbReference type="PANTHER" id="PTHR10277:SF9">
    <property type="entry name" value="2-ISOPROPYLMALATE SYNTHASE 1, CHLOROPLASTIC-RELATED"/>
    <property type="match status" value="1"/>
</dbReference>
<dbReference type="PANTHER" id="PTHR10277">
    <property type="entry name" value="HOMOCITRATE SYNTHASE-RELATED"/>
    <property type="match status" value="1"/>
</dbReference>
<dbReference type="Pfam" id="PF22617">
    <property type="entry name" value="HCS_D2"/>
    <property type="match status" value="1"/>
</dbReference>
<dbReference type="Pfam" id="PF00682">
    <property type="entry name" value="HMGL-like"/>
    <property type="match status" value="1"/>
</dbReference>
<dbReference type="Pfam" id="PF08502">
    <property type="entry name" value="LeuA_dimer"/>
    <property type="match status" value="1"/>
</dbReference>
<dbReference type="SMART" id="SM00917">
    <property type="entry name" value="LeuA_dimer"/>
    <property type="match status" value="1"/>
</dbReference>
<dbReference type="SUPFAM" id="SSF110921">
    <property type="entry name" value="2-isopropylmalate synthase LeuA, allosteric (dimerisation) domain"/>
    <property type="match status" value="1"/>
</dbReference>
<dbReference type="SUPFAM" id="SSF51569">
    <property type="entry name" value="Aldolase"/>
    <property type="match status" value="1"/>
</dbReference>
<dbReference type="PROSITE" id="PS00815">
    <property type="entry name" value="AIPM_HOMOCIT_SYNTH_1"/>
    <property type="match status" value="1"/>
</dbReference>
<dbReference type="PROSITE" id="PS00816">
    <property type="entry name" value="AIPM_HOMOCIT_SYNTH_2"/>
    <property type="match status" value="1"/>
</dbReference>
<dbReference type="PROSITE" id="PS50991">
    <property type="entry name" value="PYR_CT"/>
    <property type="match status" value="1"/>
</dbReference>
<protein>
    <recommendedName>
        <fullName evidence="1">2-isopropylmalate synthase</fullName>
        <ecNumber evidence="1">2.3.3.13</ecNumber>
    </recommendedName>
    <alternativeName>
        <fullName evidence="1">Alpha-IPM synthase</fullName>
    </alternativeName>
    <alternativeName>
        <fullName evidence="1">Alpha-isopropylmalate synthase</fullName>
    </alternativeName>
</protein>
<organism>
    <name type="scientific">Bacillus thuringiensis subsp. konkukian (strain 97-27)</name>
    <dbReference type="NCBI Taxonomy" id="281309"/>
    <lineage>
        <taxon>Bacteria</taxon>
        <taxon>Bacillati</taxon>
        <taxon>Bacillota</taxon>
        <taxon>Bacilli</taxon>
        <taxon>Bacillales</taxon>
        <taxon>Bacillaceae</taxon>
        <taxon>Bacillus</taxon>
        <taxon>Bacillus cereus group</taxon>
    </lineage>
</organism>
<gene>
    <name evidence="1" type="primary">leuA</name>
    <name type="ordered locus">BT9727_1284</name>
</gene>